<sequence length="416" mass="44163">MPRQLSAAAVLFASLAVILHDGSQMRAKAFPKTRDYSQPTAAATGQDIAKPVQQPANQAPHQTLAARLMDGHITFQTAATIKTPTTTPVTTKNTPTTSPIIYTLVTTQATSNNSHTAPPLTKVTVGPSLAPYSLPPTITPPAHTTGTSSSTVNHTTGNATQPSNQTTLPATLSIAPHKSTTGQKPVQPTHAPGTTAAAHNTTRTAAPASTVPGSTLAPQPSSIKTGIYQVLNGSRLCIKAEMGIQLIVQDKESVFSPRRYFNLDPNATQASGNCGTRNSNLLLNFQGGFVNLTFTKDEGSYYISEVGACLTVSDPETIYQGMKHAVVMFQTVVGHSFKCVSEQSLQLSAHLQLKTTNVQLQAFDFEDDHFGNVDECSSDYTIVLPVIGAIVVGLCLVGMGVYKIRLRCQSSGYQRI</sequence>
<dbReference type="EMBL" id="AF416334">
    <property type="protein sequence ID" value="AAM90730.1"/>
    <property type="molecule type" value="mRNA"/>
</dbReference>
<dbReference type="RefSeq" id="NP_001028044.1">
    <property type="nucleotide sequence ID" value="NM_001032872.1"/>
</dbReference>
<dbReference type="SMR" id="Q8MJJ2"/>
<dbReference type="FunCoup" id="Q8MJJ2">
    <property type="interactions" value="448"/>
</dbReference>
<dbReference type="STRING" id="9544.ENSMMUP00000064209"/>
<dbReference type="GlyCosmos" id="Q8MJJ2">
    <property type="glycosylation" value="2 sites, No reported glycans"/>
</dbReference>
<dbReference type="PaxDb" id="9544-ENSMMUP00000013842"/>
<dbReference type="Ensembl" id="ENSMMUT00000083884.1">
    <property type="protein sequence ID" value="ENSMMUP00000074108.1"/>
    <property type="gene ID" value="ENSMMUG00000010555.4"/>
</dbReference>
<dbReference type="GeneID" id="574213"/>
<dbReference type="KEGG" id="mcc:574213"/>
<dbReference type="CTD" id="27074"/>
<dbReference type="VEuPathDB" id="HostDB:ENSMMUG00000010555"/>
<dbReference type="VGNC" id="VGNC:74045">
    <property type="gene designation" value="LAMP3"/>
</dbReference>
<dbReference type="eggNOG" id="KOG4818">
    <property type="taxonomic scope" value="Eukaryota"/>
</dbReference>
<dbReference type="GeneTree" id="ENSGT00940000164015"/>
<dbReference type="InParanoid" id="Q8MJJ2"/>
<dbReference type="OrthoDB" id="9428839at2759"/>
<dbReference type="Proteomes" id="UP000006718">
    <property type="component" value="Chromosome 2"/>
</dbReference>
<dbReference type="Bgee" id="ENSMMUG00000010555">
    <property type="expression patterns" value="Expressed in lung and 5 other cell types or tissues"/>
</dbReference>
<dbReference type="ExpressionAtlas" id="Q8MJJ2">
    <property type="expression patterns" value="baseline"/>
</dbReference>
<dbReference type="GO" id="GO:0009986">
    <property type="term" value="C:cell surface"/>
    <property type="evidence" value="ECO:0007669"/>
    <property type="project" value="UniProtKB-SubCell"/>
</dbReference>
<dbReference type="GO" id="GO:0031901">
    <property type="term" value="C:early endosome membrane"/>
    <property type="evidence" value="ECO:0007669"/>
    <property type="project" value="UniProtKB-SubCell"/>
</dbReference>
<dbReference type="GO" id="GO:0031902">
    <property type="term" value="C:late endosome membrane"/>
    <property type="evidence" value="ECO:0000318"/>
    <property type="project" value="GO_Central"/>
</dbReference>
<dbReference type="GO" id="GO:0005765">
    <property type="term" value="C:lysosomal membrane"/>
    <property type="evidence" value="ECO:0000318"/>
    <property type="project" value="GO_Central"/>
</dbReference>
<dbReference type="GO" id="GO:0005886">
    <property type="term" value="C:plasma membrane"/>
    <property type="evidence" value="ECO:0000318"/>
    <property type="project" value="GO_Central"/>
</dbReference>
<dbReference type="GO" id="GO:0002250">
    <property type="term" value="P:adaptive immune response"/>
    <property type="evidence" value="ECO:0007669"/>
    <property type="project" value="UniProtKB-KW"/>
</dbReference>
<dbReference type="GO" id="GO:0072594">
    <property type="term" value="P:establishment of protein localization to organelle"/>
    <property type="evidence" value="ECO:0000318"/>
    <property type="project" value="GO_Central"/>
</dbReference>
<dbReference type="FunFam" id="2.40.160.110:FF:000006">
    <property type="entry name" value="Lysosome-associated membrane glycoprotein 3"/>
    <property type="match status" value="1"/>
</dbReference>
<dbReference type="Gene3D" id="2.40.160.110">
    <property type="match status" value="1"/>
</dbReference>
<dbReference type="InterPro" id="IPR048528">
    <property type="entry name" value="Lamp2-like_luminal"/>
</dbReference>
<dbReference type="InterPro" id="IPR002000">
    <property type="entry name" value="Lysosome-assoc_membr_glycop"/>
</dbReference>
<dbReference type="PANTHER" id="PTHR11506">
    <property type="entry name" value="LYSOSOME-ASSOCIATED MEMBRANE GLYCOPROTEIN"/>
    <property type="match status" value="1"/>
</dbReference>
<dbReference type="PANTHER" id="PTHR11506:SF30">
    <property type="entry name" value="LYSOSOME-ASSOCIATED MEMBRANE GLYCOPROTEIN 3"/>
    <property type="match status" value="1"/>
</dbReference>
<dbReference type="Pfam" id="PF01299">
    <property type="entry name" value="Lamp2-like_luminal"/>
    <property type="match status" value="1"/>
</dbReference>
<dbReference type="PRINTS" id="PR00336">
    <property type="entry name" value="LYSASSOCTDMP"/>
</dbReference>
<dbReference type="PROSITE" id="PS51407">
    <property type="entry name" value="LAMP_3"/>
    <property type="match status" value="1"/>
</dbReference>
<keyword id="KW-1064">Adaptive immunity</keyword>
<keyword id="KW-0968">Cytoplasmic vesicle</keyword>
<keyword id="KW-1015">Disulfide bond</keyword>
<keyword id="KW-0967">Endosome</keyword>
<keyword id="KW-0325">Glycoprotein</keyword>
<keyword id="KW-0391">Immunity</keyword>
<keyword id="KW-0458">Lysosome</keyword>
<keyword id="KW-0472">Membrane</keyword>
<keyword id="KW-1185">Reference proteome</keyword>
<keyword id="KW-0732">Signal</keyword>
<keyword id="KW-0812">Transmembrane</keyword>
<keyword id="KW-1133">Transmembrane helix</keyword>
<reference key="1">
    <citation type="journal article" date="2002" name="Am. J. Pathol.">
        <title>Restricted SIV replication in rhesus macaque lung tissues during the acute phase of infection.</title>
        <authorList>
            <person name="Fuller C.L."/>
            <person name="Choi Y.K."/>
            <person name="Fallert B.A."/>
            <person name="Capuano S. III"/>
            <person name="Rajakumar P."/>
            <person name="Murphey-Corb M."/>
            <person name="Reinhart T.A."/>
        </authorList>
    </citation>
    <scope>NUCLEOTIDE SEQUENCE [MRNA]</scope>
    <source>
        <tissue>Lung</tissue>
    </source>
</reference>
<feature type="signal peptide" evidence="3">
    <location>
        <begin position="1"/>
        <end position="27"/>
    </location>
</feature>
<feature type="chain" id="PRO_0000223696" description="Lysosome-associated membrane glycoprotein 3">
    <location>
        <begin position="28"/>
        <end position="416"/>
    </location>
</feature>
<feature type="topological domain" description="Lumenal" evidence="3">
    <location>
        <begin position="28"/>
        <end position="381"/>
    </location>
</feature>
<feature type="transmembrane region" description="Helical" evidence="4">
    <location>
        <begin position="382"/>
        <end position="402"/>
    </location>
</feature>
<feature type="topological domain" description="Cytoplasmic" evidence="4">
    <location>
        <begin position="403"/>
        <end position="416"/>
    </location>
</feature>
<feature type="region of interest" description="Disordered" evidence="5">
    <location>
        <begin position="135"/>
        <end position="217"/>
    </location>
</feature>
<feature type="compositionally biased region" description="Polar residues" evidence="5">
    <location>
        <begin position="142"/>
        <end position="170"/>
    </location>
</feature>
<feature type="compositionally biased region" description="Low complexity" evidence="5">
    <location>
        <begin position="188"/>
        <end position="208"/>
    </location>
</feature>
<feature type="glycosylation site" description="N-linked (GlcNAc...) asparagine" evidence="3">
    <location>
        <position position="200"/>
    </location>
</feature>
<feature type="glycosylation site" description="N-linked (GlcNAc...) asparagine" evidence="3">
    <location>
        <position position="291"/>
    </location>
</feature>
<feature type="disulfide bond" evidence="4">
    <location>
        <begin position="237"/>
        <end position="274"/>
    </location>
</feature>
<feature type="disulfide bond" evidence="4">
    <location>
        <begin position="339"/>
        <end position="376"/>
    </location>
</feature>
<comment type="function">
    <text evidence="2">Lysosomal membrane glycoprotein which plays a role in the unfolded protein response (UPR) that contributes to protein degradation and cell survival during proteasomal dysfunction. Plays a role in the process of fusion of the lysosome with the autophagosome, thereby modulating the autophagic process. Promotes hepatocellular lipogenesis through activation of the PI3K/Akt pathway. May also play a role in dendritic cell function and in adaptive immunity.</text>
</comment>
<comment type="subunit">
    <text evidence="1">Monomer. Interacts with FURIN.</text>
</comment>
<comment type="subcellular location">
    <subcellularLocation>
        <location evidence="2">Cell surface</location>
    </subcellularLocation>
    <subcellularLocation>
        <location evidence="2">Lysosome membrane</location>
        <topology evidence="3">Single-pass type I membrane protein</topology>
    </subcellularLocation>
    <subcellularLocation>
        <location evidence="2">Cytoplasmic vesicle membrane</location>
        <topology evidence="3">Single-pass type I membrane protein</topology>
    </subcellularLocation>
    <subcellularLocation>
        <location evidence="2">Early endosome membrane</location>
        <topology evidence="3">Single-pass type I membrane protein</topology>
    </subcellularLocation>
    <text evidence="2">During dendritic cell maturation, detected on cytoplasmic vesicles (the MHC II compartment) that contain MHC II proteins, LAMP1, LAMP2 and LAMP3. Detected on lysosomes in mature dendritic cells.</text>
</comment>
<comment type="similarity">
    <text evidence="4">Belongs to the LAMP family.</text>
</comment>
<gene>
    <name type="primary">LAMP3</name>
</gene>
<proteinExistence type="evidence at transcript level"/>
<name>LAMP3_MACMU</name>
<organism>
    <name type="scientific">Macaca mulatta</name>
    <name type="common">Rhesus macaque</name>
    <dbReference type="NCBI Taxonomy" id="9544"/>
    <lineage>
        <taxon>Eukaryota</taxon>
        <taxon>Metazoa</taxon>
        <taxon>Chordata</taxon>
        <taxon>Craniata</taxon>
        <taxon>Vertebrata</taxon>
        <taxon>Euteleostomi</taxon>
        <taxon>Mammalia</taxon>
        <taxon>Eutheria</taxon>
        <taxon>Euarchontoglires</taxon>
        <taxon>Primates</taxon>
        <taxon>Haplorrhini</taxon>
        <taxon>Catarrhini</taxon>
        <taxon>Cercopithecidae</taxon>
        <taxon>Cercopithecinae</taxon>
        <taxon>Macaca</taxon>
    </lineage>
</organism>
<protein>
    <recommendedName>
        <fullName>Lysosome-associated membrane glycoprotein 3</fullName>
        <shortName>LAMP-3</shortName>
        <shortName>Lysosomal-associated membrane protein 3</shortName>
    </recommendedName>
    <alternativeName>
        <fullName>DC-lysosome-associated membrane glycoprotein</fullName>
        <shortName>DC LAMP</shortName>
    </alternativeName>
    <cdAntigenName>CD208</cdAntigenName>
</protein>
<evidence type="ECO:0000250" key="1"/>
<evidence type="ECO:0000250" key="2">
    <source>
        <dbReference type="UniProtKB" id="Q9UQV4"/>
    </source>
</evidence>
<evidence type="ECO:0000255" key="3"/>
<evidence type="ECO:0000255" key="4">
    <source>
        <dbReference type="PROSITE-ProRule" id="PRU00740"/>
    </source>
</evidence>
<evidence type="ECO:0000256" key="5">
    <source>
        <dbReference type="SAM" id="MobiDB-lite"/>
    </source>
</evidence>
<accession>Q8MJJ2</accession>